<comment type="function">
    <text evidence="1">May regulate calcium-dependent activities in the endoplasmic reticulum lumen or post-ER compartment.</text>
</comment>
<comment type="subcellular location">
    <subcellularLocation>
        <location evidence="2">Golgi apparatus lumen</location>
    </subcellularLocation>
</comment>
<comment type="similarity">
    <text evidence="5">Belongs to the CREC family.</text>
</comment>
<dbReference type="EMBL" id="BC091026">
    <property type="protein sequence ID" value="AAH91026.1"/>
    <property type="molecule type" value="mRNA"/>
</dbReference>
<dbReference type="RefSeq" id="NP_001025582.1">
    <property type="nucleotide sequence ID" value="NM_001030411.1"/>
</dbReference>
<dbReference type="RefSeq" id="XP_012822123.1">
    <property type="nucleotide sequence ID" value="XM_012966669.3"/>
</dbReference>
<dbReference type="RefSeq" id="XP_017950899.1">
    <property type="nucleotide sequence ID" value="XM_018095410.2"/>
</dbReference>
<dbReference type="FunCoup" id="Q5BKL9">
    <property type="interactions" value="1524"/>
</dbReference>
<dbReference type="STRING" id="8364.ENSXETP00000011223"/>
<dbReference type="GlyCosmos" id="Q5BKL9">
    <property type="glycosylation" value="1 site, No reported glycans"/>
</dbReference>
<dbReference type="PaxDb" id="8364-ENSXETP00000031726"/>
<dbReference type="DNASU" id="594970"/>
<dbReference type="GeneID" id="594970"/>
<dbReference type="KEGG" id="xtr:594970"/>
<dbReference type="AGR" id="Xenbase:XB-GENE-956501"/>
<dbReference type="CTD" id="51150"/>
<dbReference type="Xenbase" id="XB-GENE-956501">
    <property type="gene designation" value="sdf4"/>
</dbReference>
<dbReference type="eggNOG" id="KOG4251">
    <property type="taxonomic scope" value="Eukaryota"/>
</dbReference>
<dbReference type="HOGENOM" id="CLU_044718_1_0_1"/>
<dbReference type="InParanoid" id="Q5BKL9"/>
<dbReference type="OMA" id="MNEYSAL"/>
<dbReference type="OrthoDB" id="9978834at2759"/>
<dbReference type="PhylomeDB" id="Q5BKL9"/>
<dbReference type="Proteomes" id="UP000008143">
    <property type="component" value="Chromosome 7"/>
</dbReference>
<dbReference type="Bgee" id="ENSXETG00000001037">
    <property type="expression patterns" value="Expressed in liver and 18 other cell types or tissues"/>
</dbReference>
<dbReference type="GO" id="GO:0005796">
    <property type="term" value="C:Golgi lumen"/>
    <property type="evidence" value="ECO:0007669"/>
    <property type="project" value="UniProtKB-SubCell"/>
</dbReference>
<dbReference type="GO" id="GO:0005509">
    <property type="term" value="F:calcium ion binding"/>
    <property type="evidence" value="ECO:0007669"/>
    <property type="project" value="InterPro"/>
</dbReference>
<dbReference type="CDD" id="cd16225">
    <property type="entry name" value="EFh_CREC_cab45"/>
    <property type="match status" value="1"/>
</dbReference>
<dbReference type="FunFam" id="1.10.238.10:FF:000120">
    <property type="entry name" value="45 kDa calcium-binding protein"/>
    <property type="match status" value="1"/>
</dbReference>
<dbReference type="FunFam" id="1.10.238.10:FF:000207">
    <property type="entry name" value="Putative 45 kDa calcium-binding protein"/>
    <property type="match status" value="1"/>
</dbReference>
<dbReference type="Gene3D" id="1.10.238.10">
    <property type="entry name" value="EF-hand"/>
    <property type="match status" value="3"/>
</dbReference>
<dbReference type="InterPro" id="IPR027240">
    <property type="entry name" value="CAB45_EFh"/>
</dbReference>
<dbReference type="InterPro" id="IPR011992">
    <property type="entry name" value="EF-hand-dom_pair"/>
</dbReference>
<dbReference type="InterPro" id="IPR018247">
    <property type="entry name" value="EF_Hand_1_Ca_BS"/>
</dbReference>
<dbReference type="InterPro" id="IPR002048">
    <property type="entry name" value="EF_hand_dom"/>
</dbReference>
<dbReference type="PANTHER" id="PTHR10827:SF98">
    <property type="entry name" value="45 KDA CALCIUM-BINDING PROTEIN"/>
    <property type="match status" value="1"/>
</dbReference>
<dbReference type="PANTHER" id="PTHR10827">
    <property type="entry name" value="RETICULOCALBIN"/>
    <property type="match status" value="1"/>
</dbReference>
<dbReference type="Pfam" id="PF13202">
    <property type="entry name" value="EF-hand_5"/>
    <property type="match status" value="1"/>
</dbReference>
<dbReference type="Pfam" id="PF13499">
    <property type="entry name" value="EF-hand_7"/>
    <property type="match status" value="1"/>
</dbReference>
<dbReference type="SMART" id="SM00054">
    <property type="entry name" value="EFh"/>
    <property type="match status" value="5"/>
</dbReference>
<dbReference type="SUPFAM" id="SSF47473">
    <property type="entry name" value="EF-hand"/>
    <property type="match status" value="2"/>
</dbReference>
<dbReference type="PROSITE" id="PS00018">
    <property type="entry name" value="EF_HAND_1"/>
    <property type="match status" value="5"/>
</dbReference>
<dbReference type="PROSITE" id="PS50222">
    <property type="entry name" value="EF_HAND_2"/>
    <property type="match status" value="5"/>
</dbReference>
<organism>
    <name type="scientific">Xenopus tropicalis</name>
    <name type="common">Western clawed frog</name>
    <name type="synonym">Silurana tropicalis</name>
    <dbReference type="NCBI Taxonomy" id="8364"/>
    <lineage>
        <taxon>Eukaryota</taxon>
        <taxon>Metazoa</taxon>
        <taxon>Chordata</taxon>
        <taxon>Craniata</taxon>
        <taxon>Vertebrata</taxon>
        <taxon>Euteleostomi</taxon>
        <taxon>Amphibia</taxon>
        <taxon>Batrachia</taxon>
        <taxon>Anura</taxon>
        <taxon>Pipoidea</taxon>
        <taxon>Pipidae</taxon>
        <taxon>Xenopodinae</taxon>
        <taxon>Xenopus</taxon>
        <taxon>Silurana</taxon>
    </lineage>
</organism>
<name>CAB45_XENTR</name>
<feature type="signal peptide" evidence="3">
    <location>
        <begin position="1"/>
        <end position="29"/>
    </location>
</feature>
<feature type="chain" id="PRO_0000377521" description="45 kDa calcium-binding protein">
    <location>
        <begin position="30"/>
        <end position="360"/>
    </location>
</feature>
<feature type="domain" description="EF-hand 1" evidence="4">
    <location>
        <begin position="96"/>
        <end position="131"/>
    </location>
</feature>
<feature type="domain" description="EF-hand 2" evidence="4">
    <location>
        <begin position="135"/>
        <end position="170"/>
    </location>
</feature>
<feature type="domain" description="EF-hand 3" evidence="4">
    <location>
        <begin position="231"/>
        <end position="266"/>
    </location>
</feature>
<feature type="domain" description="EF-hand 4" evidence="4">
    <location>
        <begin position="276"/>
        <end position="311"/>
    </location>
</feature>
<feature type="domain" description="EF-hand 5" evidence="4">
    <location>
        <begin position="312"/>
        <end position="347"/>
    </location>
</feature>
<feature type="binding site" evidence="4">
    <location>
        <position position="109"/>
    </location>
    <ligand>
        <name>Ca(2+)</name>
        <dbReference type="ChEBI" id="CHEBI:29108"/>
        <label>1</label>
    </ligand>
</feature>
<feature type="binding site" evidence="4">
    <location>
        <position position="111"/>
    </location>
    <ligand>
        <name>Ca(2+)</name>
        <dbReference type="ChEBI" id="CHEBI:29108"/>
        <label>1</label>
    </ligand>
</feature>
<feature type="binding site" evidence="4">
    <location>
        <position position="113"/>
    </location>
    <ligand>
        <name>Ca(2+)</name>
        <dbReference type="ChEBI" id="CHEBI:29108"/>
        <label>1</label>
    </ligand>
</feature>
<feature type="binding site" evidence="4">
    <location>
        <position position="115"/>
    </location>
    <ligand>
        <name>Ca(2+)</name>
        <dbReference type="ChEBI" id="CHEBI:29108"/>
        <label>1</label>
    </ligand>
</feature>
<feature type="binding site" evidence="4">
    <location>
        <position position="120"/>
    </location>
    <ligand>
        <name>Ca(2+)</name>
        <dbReference type="ChEBI" id="CHEBI:29108"/>
        <label>1</label>
    </ligand>
</feature>
<feature type="binding site" evidence="4">
    <location>
        <position position="148"/>
    </location>
    <ligand>
        <name>Ca(2+)</name>
        <dbReference type="ChEBI" id="CHEBI:29108"/>
        <label>2</label>
    </ligand>
</feature>
<feature type="binding site" evidence="4">
    <location>
        <position position="150"/>
    </location>
    <ligand>
        <name>Ca(2+)</name>
        <dbReference type="ChEBI" id="CHEBI:29108"/>
        <label>2</label>
    </ligand>
</feature>
<feature type="binding site" evidence="4">
    <location>
        <position position="152"/>
    </location>
    <ligand>
        <name>Ca(2+)</name>
        <dbReference type="ChEBI" id="CHEBI:29108"/>
        <label>2</label>
    </ligand>
</feature>
<feature type="binding site" evidence="4">
    <location>
        <position position="154"/>
    </location>
    <ligand>
        <name>Ca(2+)</name>
        <dbReference type="ChEBI" id="CHEBI:29108"/>
        <label>2</label>
    </ligand>
</feature>
<feature type="binding site" evidence="4">
    <location>
        <position position="159"/>
    </location>
    <ligand>
        <name>Ca(2+)</name>
        <dbReference type="ChEBI" id="CHEBI:29108"/>
        <label>2</label>
    </ligand>
</feature>
<feature type="binding site" evidence="4">
    <location>
        <position position="244"/>
    </location>
    <ligand>
        <name>Ca(2+)</name>
        <dbReference type="ChEBI" id="CHEBI:29108"/>
        <label>3</label>
    </ligand>
</feature>
<feature type="binding site" evidence="4">
    <location>
        <position position="246"/>
    </location>
    <ligand>
        <name>Ca(2+)</name>
        <dbReference type="ChEBI" id="CHEBI:29108"/>
        <label>3</label>
    </ligand>
</feature>
<feature type="binding site" evidence="4">
    <location>
        <position position="248"/>
    </location>
    <ligand>
        <name>Ca(2+)</name>
        <dbReference type="ChEBI" id="CHEBI:29108"/>
        <label>3</label>
    </ligand>
</feature>
<feature type="binding site" evidence="4">
    <location>
        <position position="250"/>
    </location>
    <ligand>
        <name>Ca(2+)</name>
        <dbReference type="ChEBI" id="CHEBI:29108"/>
        <label>3</label>
    </ligand>
</feature>
<feature type="binding site" evidence="4">
    <location>
        <position position="255"/>
    </location>
    <ligand>
        <name>Ca(2+)</name>
        <dbReference type="ChEBI" id="CHEBI:29108"/>
        <label>3</label>
    </ligand>
</feature>
<feature type="binding site" evidence="4">
    <location>
        <position position="289"/>
    </location>
    <ligand>
        <name>Ca(2+)</name>
        <dbReference type="ChEBI" id="CHEBI:29108"/>
        <label>4</label>
    </ligand>
</feature>
<feature type="binding site" evidence="4">
    <location>
        <position position="291"/>
    </location>
    <ligand>
        <name>Ca(2+)</name>
        <dbReference type="ChEBI" id="CHEBI:29108"/>
        <label>4</label>
    </ligand>
</feature>
<feature type="binding site" evidence="4">
    <location>
        <position position="293"/>
    </location>
    <ligand>
        <name>Ca(2+)</name>
        <dbReference type="ChEBI" id="CHEBI:29108"/>
        <label>4</label>
    </ligand>
</feature>
<feature type="binding site" evidence="4">
    <location>
        <position position="300"/>
    </location>
    <ligand>
        <name>Ca(2+)</name>
        <dbReference type="ChEBI" id="CHEBI:29108"/>
        <label>4</label>
    </ligand>
</feature>
<feature type="binding site" evidence="4">
    <location>
        <position position="325"/>
    </location>
    <ligand>
        <name>Ca(2+)</name>
        <dbReference type="ChEBI" id="CHEBI:29108"/>
        <label>5</label>
    </ligand>
</feature>
<feature type="binding site" evidence="4">
    <location>
        <position position="327"/>
    </location>
    <ligand>
        <name>Ca(2+)</name>
        <dbReference type="ChEBI" id="CHEBI:29108"/>
        <label>5</label>
    </ligand>
</feature>
<feature type="binding site" evidence="4">
    <location>
        <position position="329"/>
    </location>
    <ligand>
        <name>Ca(2+)</name>
        <dbReference type="ChEBI" id="CHEBI:29108"/>
        <label>5</label>
    </ligand>
</feature>
<feature type="binding site" evidence="4">
    <location>
        <position position="331"/>
    </location>
    <ligand>
        <name>Ca(2+)</name>
        <dbReference type="ChEBI" id="CHEBI:29108"/>
        <label>5</label>
    </ligand>
</feature>
<feature type="binding site" evidence="4">
    <location>
        <position position="336"/>
    </location>
    <ligand>
        <name>Ca(2+)</name>
        <dbReference type="ChEBI" id="CHEBI:29108"/>
        <label>5</label>
    </ligand>
</feature>
<feature type="glycosylation site" description="N-linked (GlcNAc...) asparagine" evidence="3">
    <location>
        <position position="33"/>
    </location>
</feature>
<accession>Q5BKL9</accession>
<keyword id="KW-0106">Calcium</keyword>
<keyword id="KW-0325">Glycoprotein</keyword>
<keyword id="KW-0333">Golgi apparatus</keyword>
<keyword id="KW-0479">Metal-binding</keyword>
<keyword id="KW-1185">Reference proteome</keyword>
<keyword id="KW-0677">Repeat</keyword>
<keyword id="KW-0732">Signal</keyword>
<gene>
    <name type="primary">sdf4</name>
    <name type="synonym">cab45</name>
</gene>
<proteinExistence type="evidence at transcript level"/>
<reference key="1">
    <citation type="submission" date="2005-03" db="EMBL/GenBank/DDBJ databases">
        <authorList>
            <consortium name="NIH - Xenopus Gene Collection (XGC) project"/>
        </authorList>
    </citation>
    <scope>NUCLEOTIDE SEQUENCE [LARGE SCALE MRNA]</scope>
    <source>
        <tissue>Embryo</tissue>
    </source>
</reference>
<sequence>MVSKQAFLFSLGSLYLSLLFVFLLMDVYARPANNSALKVEGKEKATDNKDENEIMPPDHLNGVKMEMDGHLNKEFHQEVFLGKEIEEFDEDSEPRRNRRKLAAIFAKVDRNEDKQISANEMQRWIMEKTEEHFQEAVNENKLHFRAVDPDGDGHVSWDEYKIKFLASKGFNEKEVAEKLKNNEDLKIDEETQEVLDNLKDRWFQADNPPADQLLNEEEFLSFLHPEHSQGMLKFMVKEIIRDLDQDGDKKLTLSEFISLPVGTVENQQAQDIDDDWVRDRKKEYEEVIDANHDGIVTMEELEEYMDPMNEYNALNEAKQMIAVADENQDHHLSLEEILKYSEYFTGSKLMDYARNVHEEF</sequence>
<protein>
    <recommendedName>
        <fullName>45 kDa calcium-binding protein</fullName>
        <shortName>Cab45</shortName>
    </recommendedName>
    <alternativeName>
        <fullName>Stromal cell-derived factor 4</fullName>
        <shortName>SDF-4</shortName>
    </alternativeName>
</protein>
<evidence type="ECO:0000250" key="1"/>
<evidence type="ECO:0000250" key="2">
    <source>
        <dbReference type="UniProtKB" id="Q61112"/>
    </source>
</evidence>
<evidence type="ECO:0000255" key="3"/>
<evidence type="ECO:0000255" key="4">
    <source>
        <dbReference type="PROSITE-ProRule" id="PRU00448"/>
    </source>
</evidence>
<evidence type="ECO:0000305" key="5"/>